<organism>
    <name type="scientific">Salmonella typhimurium (strain LT2 / SGSC1412 / ATCC 700720)</name>
    <dbReference type="NCBI Taxonomy" id="99287"/>
    <lineage>
        <taxon>Bacteria</taxon>
        <taxon>Pseudomonadati</taxon>
        <taxon>Pseudomonadota</taxon>
        <taxon>Gammaproteobacteria</taxon>
        <taxon>Enterobacterales</taxon>
        <taxon>Enterobacteriaceae</taxon>
        <taxon>Salmonella</taxon>
    </lineage>
</organism>
<comment type="function">
    <text evidence="1">Catalyzes the tRNA-independent activation of glutamate in presence of ATP and the subsequent transfer of glutamate onto a tRNA(Asp). Glutamate is transferred on the 2-amino-5-(4,5-dihydroxy-2-cyclopenten-1-yl) moiety of the queuosine in the wobble position of the QUC anticodon.</text>
</comment>
<comment type="cofactor">
    <cofactor evidence="1">
        <name>Zn(2+)</name>
        <dbReference type="ChEBI" id="CHEBI:29105"/>
    </cofactor>
    <text evidence="1">Binds 1 zinc ion per subunit.</text>
</comment>
<comment type="similarity">
    <text evidence="1">Belongs to the class-I aminoacyl-tRNA synthetase family. GluQ subfamily.</text>
</comment>
<comment type="sequence caution" evidence="2">
    <conflict type="erroneous initiation">
        <sequence resource="EMBL-CDS" id="AAL19149"/>
    </conflict>
</comment>
<evidence type="ECO:0000255" key="1">
    <source>
        <dbReference type="HAMAP-Rule" id="MF_01428"/>
    </source>
</evidence>
<evidence type="ECO:0000305" key="2"/>
<proteinExistence type="inferred from homology"/>
<sequence length="298" mass="33567">MTDSHYIGRFAPSPSGELHFGSLIAALGSYLQARAQRGIWRVRIEDIDPPREVPGAAATILRQLEHYGLHWDGEVLWQSQRHEAYREALAWLHEQGLSYYCTCPRSRIQRLGGIYDGHCRTLCHGPENAAVRIKQQHPVMHFHDALRGDIQADPQLASEDFIIHRRDGLFAYNLAVVVDDHFQGVTEIVRGADLIEPTVRQLSLYKQFGWRAPGYVHLPLALNEQGAKLSKQNHAPALATGDPRPVLVQALRFLGQRDVVAWQEMSVEELLRFAVAHWRLTAVPTSANVNPAFSNASR</sequence>
<accession>Q8ZRQ7</accession>
<name>GLUQ_SALTY</name>
<reference key="1">
    <citation type="journal article" date="2001" name="Nature">
        <title>Complete genome sequence of Salmonella enterica serovar Typhimurium LT2.</title>
        <authorList>
            <person name="McClelland M."/>
            <person name="Sanderson K.E."/>
            <person name="Spieth J."/>
            <person name="Clifton S.W."/>
            <person name="Latreille P."/>
            <person name="Courtney L."/>
            <person name="Porwollik S."/>
            <person name="Ali J."/>
            <person name="Dante M."/>
            <person name="Du F."/>
            <person name="Hou S."/>
            <person name="Layman D."/>
            <person name="Leonard S."/>
            <person name="Nguyen C."/>
            <person name="Scott K."/>
            <person name="Holmes A."/>
            <person name="Grewal N."/>
            <person name="Mulvaney E."/>
            <person name="Ryan E."/>
            <person name="Sun H."/>
            <person name="Florea L."/>
            <person name="Miller W."/>
            <person name="Stoneking T."/>
            <person name="Nhan M."/>
            <person name="Waterston R."/>
            <person name="Wilson R.K."/>
        </authorList>
    </citation>
    <scope>NUCLEOTIDE SEQUENCE [LARGE SCALE GENOMIC DNA]</scope>
    <source>
        <strain>LT2 / SGSC1412 / ATCC 700720</strain>
    </source>
</reference>
<keyword id="KW-0030">Aminoacyl-tRNA synthetase</keyword>
<keyword id="KW-0067">ATP-binding</keyword>
<keyword id="KW-0436">Ligase</keyword>
<keyword id="KW-0479">Metal-binding</keyword>
<keyword id="KW-0547">Nucleotide-binding</keyword>
<keyword id="KW-1185">Reference proteome</keyword>
<keyword id="KW-0862">Zinc</keyword>
<protein>
    <recommendedName>
        <fullName evidence="1">Glutamyl-Q tRNA(Asp) synthetase</fullName>
        <shortName evidence="1">Glu-Q-RSs</shortName>
        <ecNumber evidence="1">6.1.1.-</ecNumber>
    </recommendedName>
</protein>
<feature type="chain" id="PRO_0000208325" description="Glutamyl-Q tRNA(Asp) synthetase">
    <location>
        <begin position="1"/>
        <end position="298"/>
    </location>
</feature>
<feature type="short sequence motif" description="'HIGH' region">
    <location>
        <begin position="12"/>
        <end position="22"/>
    </location>
</feature>
<feature type="short sequence motif" description="'KMSKS' region">
    <location>
        <begin position="228"/>
        <end position="232"/>
    </location>
</feature>
<feature type="binding site" evidence="1">
    <location>
        <begin position="9"/>
        <end position="13"/>
    </location>
    <ligand>
        <name>L-glutamate</name>
        <dbReference type="ChEBI" id="CHEBI:29985"/>
    </ligand>
</feature>
<feature type="binding site" evidence="1">
    <location>
        <position position="45"/>
    </location>
    <ligand>
        <name>L-glutamate</name>
        <dbReference type="ChEBI" id="CHEBI:29985"/>
    </ligand>
</feature>
<feature type="binding site" evidence="1">
    <location>
        <position position="101"/>
    </location>
    <ligand>
        <name>Zn(2+)</name>
        <dbReference type="ChEBI" id="CHEBI:29105"/>
    </ligand>
</feature>
<feature type="binding site" evidence="1">
    <location>
        <position position="103"/>
    </location>
    <ligand>
        <name>Zn(2+)</name>
        <dbReference type="ChEBI" id="CHEBI:29105"/>
    </ligand>
</feature>
<feature type="binding site" evidence="1">
    <location>
        <position position="115"/>
    </location>
    <ligand>
        <name>Zn(2+)</name>
        <dbReference type="ChEBI" id="CHEBI:29105"/>
    </ligand>
</feature>
<feature type="binding site" evidence="1">
    <location>
        <position position="119"/>
    </location>
    <ligand>
        <name>Zn(2+)</name>
        <dbReference type="ChEBI" id="CHEBI:29105"/>
    </ligand>
</feature>
<feature type="binding site" evidence="1">
    <location>
        <position position="172"/>
    </location>
    <ligand>
        <name>L-glutamate</name>
        <dbReference type="ChEBI" id="CHEBI:29985"/>
    </ligand>
</feature>
<feature type="binding site" evidence="1">
    <location>
        <position position="190"/>
    </location>
    <ligand>
        <name>L-glutamate</name>
        <dbReference type="ChEBI" id="CHEBI:29985"/>
    </ligand>
</feature>
<feature type="binding site" evidence="1">
    <location>
        <position position="231"/>
    </location>
    <ligand>
        <name>ATP</name>
        <dbReference type="ChEBI" id="CHEBI:30616"/>
    </ligand>
</feature>
<gene>
    <name evidence="1" type="primary">gluQ</name>
    <name type="ordered locus">STM0185</name>
</gene>
<dbReference type="EC" id="6.1.1.-" evidence="1"/>
<dbReference type="EMBL" id="AE006468">
    <property type="protein sequence ID" value="AAL19149.1"/>
    <property type="status" value="ALT_INIT"/>
    <property type="molecule type" value="Genomic_DNA"/>
</dbReference>
<dbReference type="SMR" id="Q8ZRQ7"/>
<dbReference type="STRING" id="99287.STM0185"/>
<dbReference type="PaxDb" id="99287-STM0185"/>
<dbReference type="KEGG" id="stm:STM0185"/>
<dbReference type="PATRIC" id="fig|99287.12.peg.195"/>
<dbReference type="HOGENOM" id="CLU_015768_0_1_6"/>
<dbReference type="OMA" id="WLLRMED"/>
<dbReference type="PhylomeDB" id="Q8ZRQ7"/>
<dbReference type="Proteomes" id="UP000001014">
    <property type="component" value="Chromosome"/>
</dbReference>
<dbReference type="GO" id="GO:0005829">
    <property type="term" value="C:cytosol"/>
    <property type="evidence" value="ECO:0000318"/>
    <property type="project" value="GO_Central"/>
</dbReference>
<dbReference type="GO" id="GO:0005524">
    <property type="term" value="F:ATP binding"/>
    <property type="evidence" value="ECO:0007669"/>
    <property type="project" value="UniProtKB-KW"/>
</dbReference>
<dbReference type="GO" id="GO:0004818">
    <property type="term" value="F:glutamate-tRNA ligase activity"/>
    <property type="evidence" value="ECO:0000318"/>
    <property type="project" value="GO_Central"/>
</dbReference>
<dbReference type="GO" id="GO:0008270">
    <property type="term" value="F:zinc ion binding"/>
    <property type="evidence" value="ECO:0007669"/>
    <property type="project" value="UniProtKB-UniRule"/>
</dbReference>
<dbReference type="GO" id="GO:0006424">
    <property type="term" value="P:glutamyl-tRNA aminoacylation"/>
    <property type="evidence" value="ECO:0000318"/>
    <property type="project" value="GO_Central"/>
</dbReference>
<dbReference type="GO" id="GO:0006400">
    <property type="term" value="P:tRNA modification"/>
    <property type="evidence" value="ECO:0007669"/>
    <property type="project" value="InterPro"/>
</dbReference>
<dbReference type="FunFam" id="3.40.50.620:FF:000093">
    <property type="entry name" value="Glutamyl-Q tRNA(Asp) synthetase"/>
    <property type="match status" value="1"/>
</dbReference>
<dbReference type="Gene3D" id="3.40.50.620">
    <property type="entry name" value="HUPs"/>
    <property type="match status" value="1"/>
</dbReference>
<dbReference type="HAMAP" id="MF_01428">
    <property type="entry name" value="Glu_Q_tRNA_synth"/>
    <property type="match status" value="1"/>
</dbReference>
<dbReference type="InterPro" id="IPR022380">
    <property type="entry name" value="Glu-Q_tRNA(Asp)_Synthase"/>
</dbReference>
<dbReference type="InterPro" id="IPR000924">
    <property type="entry name" value="Glu/Gln-tRNA-synth"/>
</dbReference>
<dbReference type="InterPro" id="IPR020058">
    <property type="entry name" value="Glu/Gln-tRNA-synth_Ib_cat-dom"/>
</dbReference>
<dbReference type="InterPro" id="IPR049940">
    <property type="entry name" value="GluQ/Sye"/>
</dbReference>
<dbReference type="InterPro" id="IPR014729">
    <property type="entry name" value="Rossmann-like_a/b/a_fold"/>
</dbReference>
<dbReference type="NCBIfam" id="NF004312">
    <property type="entry name" value="PRK05710.1-1"/>
    <property type="match status" value="1"/>
</dbReference>
<dbReference type="NCBIfam" id="NF004314">
    <property type="entry name" value="PRK05710.1-3"/>
    <property type="match status" value="1"/>
</dbReference>
<dbReference type="NCBIfam" id="TIGR03838">
    <property type="entry name" value="queuosine_YadB"/>
    <property type="match status" value="1"/>
</dbReference>
<dbReference type="PANTHER" id="PTHR43311">
    <property type="entry name" value="GLUTAMATE--TRNA LIGASE"/>
    <property type="match status" value="1"/>
</dbReference>
<dbReference type="PANTHER" id="PTHR43311:SF1">
    <property type="entry name" value="GLUTAMYL-Q TRNA(ASP) SYNTHETASE"/>
    <property type="match status" value="1"/>
</dbReference>
<dbReference type="Pfam" id="PF00749">
    <property type="entry name" value="tRNA-synt_1c"/>
    <property type="match status" value="1"/>
</dbReference>
<dbReference type="PRINTS" id="PR00987">
    <property type="entry name" value="TRNASYNTHGLU"/>
</dbReference>
<dbReference type="SUPFAM" id="SSF52374">
    <property type="entry name" value="Nucleotidylyl transferase"/>
    <property type="match status" value="1"/>
</dbReference>